<keyword id="KW-0378">Hydrolase</keyword>
<keyword id="KW-0904">Protein phosphatase</keyword>
<keyword id="KW-1185">Reference proteome</keyword>
<dbReference type="EC" id="3.1.3.84"/>
<dbReference type="EC" id="3.2.2.-"/>
<dbReference type="EMBL" id="CH981528">
    <property type="protein sequence ID" value="EDK45545.1"/>
    <property type="molecule type" value="Genomic_DNA"/>
</dbReference>
<dbReference type="RefSeq" id="XP_001524692.1">
    <property type="nucleotide sequence ID" value="XM_001524642.1"/>
</dbReference>
<dbReference type="SMR" id="A5E287"/>
<dbReference type="FunCoup" id="A5E287">
    <property type="interactions" value="2"/>
</dbReference>
<dbReference type="GeneID" id="5231778"/>
<dbReference type="KEGG" id="lel:PVL30_004553"/>
<dbReference type="VEuPathDB" id="FungiDB:LELG_03724"/>
<dbReference type="eggNOG" id="ENOG502S60W">
    <property type="taxonomic scope" value="Eukaryota"/>
</dbReference>
<dbReference type="HOGENOM" id="CLU_054419_1_2_1"/>
<dbReference type="InParanoid" id="A5E287"/>
<dbReference type="OMA" id="HATNCIA"/>
<dbReference type="OrthoDB" id="2155246at2759"/>
<dbReference type="Proteomes" id="UP000001996">
    <property type="component" value="Unassembled WGS sequence"/>
</dbReference>
<dbReference type="GO" id="GO:0047407">
    <property type="term" value="F:ADP-ribosyl-[dinitrogen reductase] hydrolase activity"/>
    <property type="evidence" value="ECO:0007669"/>
    <property type="project" value="EnsemblFungi"/>
</dbReference>
<dbReference type="GO" id="GO:0004721">
    <property type="term" value="F:phosphoprotein phosphatase activity"/>
    <property type="evidence" value="ECO:0007669"/>
    <property type="project" value="UniProtKB-KW"/>
</dbReference>
<dbReference type="GO" id="GO:0140291">
    <property type="term" value="P:peptidyl-glutamate ADP-deribosylation"/>
    <property type="evidence" value="ECO:0007669"/>
    <property type="project" value="TreeGrafter"/>
</dbReference>
<dbReference type="CDD" id="cd02901">
    <property type="entry name" value="Macro_Poa1p-like"/>
    <property type="match status" value="1"/>
</dbReference>
<dbReference type="Gene3D" id="3.40.220.10">
    <property type="entry name" value="Leucine Aminopeptidase, subunit E, domain 1"/>
    <property type="match status" value="1"/>
</dbReference>
<dbReference type="InterPro" id="IPR050892">
    <property type="entry name" value="ADP-ribose_metab_enzymes"/>
</dbReference>
<dbReference type="InterPro" id="IPR002589">
    <property type="entry name" value="Macro_dom"/>
</dbReference>
<dbReference type="InterPro" id="IPR043472">
    <property type="entry name" value="Macro_dom-like"/>
</dbReference>
<dbReference type="PANTHER" id="PTHR12521:SF0">
    <property type="entry name" value="ADP-RIBOSE GLYCOHYDROLASE OARD1"/>
    <property type="match status" value="1"/>
</dbReference>
<dbReference type="PANTHER" id="PTHR12521">
    <property type="entry name" value="PROTEIN C6ORF130"/>
    <property type="match status" value="1"/>
</dbReference>
<dbReference type="Pfam" id="PF01661">
    <property type="entry name" value="Macro"/>
    <property type="match status" value="1"/>
</dbReference>
<dbReference type="SMART" id="SM00506">
    <property type="entry name" value="A1pp"/>
    <property type="match status" value="1"/>
</dbReference>
<dbReference type="SUPFAM" id="SSF52949">
    <property type="entry name" value="Macro domain-like"/>
    <property type="match status" value="1"/>
</dbReference>
<dbReference type="PROSITE" id="PS51154">
    <property type="entry name" value="MACRO"/>
    <property type="match status" value="1"/>
</dbReference>
<proteinExistence type="inferred from homology"/>
<reference key="1">
    <citation type="journal article" date="2009" name="Nature">
        <title>Evolution of pathogenicity and sexual reproduction in eight Candida genomes.</title>
        <authorList>
            <person name="Butler G."/>
            <person name="Rasmussen M.D."/>
            <person name="Lin M.F."/>
            <person name="Santos M.A.S."/>
            <person name="Sakthikumar S."/>
            <person name="Munro C.A."/>
            <person name="Rheinbay E."/>
            <person name="Grabherr M."/>
            <person name="Forche A."/>
            <person name="Reedy J.L."/>
            <person name="Agrafioti I."/>
            <person name="Arnaud M.B."/>
            <person name="Bates S."/>
            <person name="Brown A.J.P."/>
            <person name="Brunke S."/>
            <person name="Costanzo M.C."/>
            <person name="Fitzpatrick D.A."/>
            <person name="de Groot P.W.J."/>
            <person name="Harris D."/>
            <person name="Hoyer L.L."/>
            <person name="Hube B."/>
            <person name="Klis F.M."/>
            <person name="Kodira C."/>
            <person name="Lennard N."/>
            <person name="Logue M.E."/>
            <person name="Martin R."/>
            <person name="Neiman A.M."/>
            <person name="Nikolaou E."/>
            <person name="Quail M.A."/>
            <person name="Quinn J."/>
            <person name="Santos M.C."/>
            <person name="Schmitzberger F.F."/>
            <person name="Sherlock G."/>
            <person name="Shah P."/>
            <person name="Silverstein K.A.T."/>
            <person name="Skrzypek M.S."/>
            <person name="Soll D."/>
            <person name="Staggs R."/>
            <person name="Stansfield I."/>
            <person name="Stumpf M.P.H."/>
            <person name="Sudbery P.E."/>
            <person name="Srikantha T."/>
            <person name="Zeng Q."/>
            <person name="Berman J."/>
            <person name="Berriman M."/>
            <person name="Heitman J."/>
            <person name="Gow N.A.R."/>
            <person name="Lorenz M.C."/>
            <person name="Birren B.W."/>
            <person name="Kellis M."/>
            <person name="Cuomo C.A."/>
        </authorList>
    </citation>
    <scope>NUCLEOTIDE SEQUENCE [LARGE SCALE GENOMIC DNA]</scope>
    <source>
        <strain>ATCC 11503 / BCRC 21390 / CBS 2605 / JCM 1781 / NBRC 1676 / NRRL YB-4239</strain>
    </source>
</reference>
<evidence type="ECO:0000250" key="1"/>
<evidence type="ECO:0000255" key="2">
    <source>
        <dbReference type="PROSITE-ProRule" id="PRU00490"/>
    </source>
</evidence>
<evidence type="ECO:0000305" key="3"/>
<comment type="function">
    <text evidence="1">Highly specific phosphatase involved in the metabolism of ADP-ribose 1''-phosphate (Appr1p) which is produced as a consequence of tRNA splicing. Removes ADP-ribose from glutamate residues in proteins bearing a single ADP-ribose moiety. Inactive towards proteins bearing poly-ADP-ribose (By similarity).</text>
</comment>
<comment type="catalytic activity">
    <reaction>
        <text>ADP-alpha-D-ribose 1''-phosphate + H2O = ADP-D-ribose + phosphate</text>
        <dbReference type="Rhea" id="RHEA:25029"/>
        <dbReference type="ChEBI" id="CHEBI:15377"/>
        <dbReference type="ChEBI" id="CHEBI:43474"/>
        <dbReference type="ChEBI" id="CHEBI:57967"/>
        <dbReference type="ChEBI" id="CHEBI:58753"/>
        <dbReference type="EC" id="3.1.3.84"/>
    </reaction>
</comment>
<comment type="similarity">
    <text evidence="3">Belongs to the POA1 family.</text>
</comment>
<protein>
    <recommendedName>
        <fullName>ADP-ribose 1''-phosphate phosphatase</fullName>
        <ecNumber>3.1.3.84</ecNumber>
        <ecNumber>3.2.2.-</ecNumber>
    </recommendedName>
    <alternativeName>
        <fullName>[Protein ADP-ribosylglutamate] hydrolase</fullName>
    </alternativeName>
</protein>
<gene>
    <name type="primary">POA1</name>
    <name type="ORF">LELG_03724</name>
</gene>
<organism>
    <name type="scientific">Lodderomyces elongisporus (strain ATCC 11503 / CBS 2605 / JCM 1781 / NBRC 1676 / NRRL YB-4239)</name>
    <name type="common">Yeast</name>
    <name type="synonym">Saccharomyces elongisporus</name>
    <dbReference type="NCBI Taxonomy" id="379508"/>
    <lineage>
        <taxon>Eukaryota</taxon>
        <taxon>Fungi</taxon>
        <taxon>Dikarya</taxon>
        <taxon>Ascomycota</taxon>
        <taxon>Saccharomycotina</taxon>
        <taxon>Pichiomycetes</taxon>
        <taxon>Debaryomycetaceae</taxon>
        <taxon>Candida/Lodderomyces clade</taxon>
        <taxon>Lodderomyces</taxon>
    </lineage>
</organism>
<name>POA1_LODEL</name>
<accession>A5E287</accession>
<feature type="chain" id="PRO_0000324908" description="ADP-ribose 1''-phosphate phosphatase">
    <location>
        <begin position="1"/>
        <end position="160"/>
    </location>
</feature>
<feature type="domain" description="Macro" evidence="2">
    <location>
        <begin position="1"/>
        <end position="160"/>
    </location>
</feature>
<feature type="binding site" evidence="1">
    <location>
        <begin position="8"/>
        <end position="10"/>
    </location>
    <ligand>
        <name>substrate</name>
    </ligand>
</feature>
<feature type="binding site" evidence="1">
    <location>
        <begin position="26"/>
        <end position="28"/>
    </location>
    <ligand>
        <name>substrate</name>
    </ligand>
</feature>
<feature type="binding site" evidence="1">
    <location>
        <begin position="33"/>
        <end position="38"/>
    </location>
    <ligand>
        <name>substrate</name>
    </ligand>
</feature>
<feature type="binding site" evidence="1">
    <location>
        <begin position="130"/>
        <end position="136"/>
    </location>
    <ligand>
        <name>substrate</name>
    </ligand>
</feature>
<sequence length="160" mass="17738">MTVKYIRGDLFTHSAPTGKSIVLAHACNTGGSWGGGIAAVFARKYPKANRQYSEYCHKNSHLLGTSLLLKADDYDKSKAYIACLFTSDFNQSPEQIVKYTDQSLQELAKQLKSLPIETQNGNQVVNMPKINSGIFGVPWENTEAVLDKLDSLDFNVYVID</sequence>